<feature type="chain" id="PRO_1000131901" description="Leucyl/phenylalanyl-tRNA--protein transferase">
    <location>
        <begin position="1"/>
        <end position="193"/>
    </location>
</feature>
<gene>
    <name evidence="1" type="primary">aat</name>
    <name type="ordered locus">Amuc_1973</name>
</gene>
<sequence length="193" mass="22173">MNDRLTPELVLSAYCQGCFPMADPETGEISFYEPDPRALIPLDDRFHIPHGLKRALNKKPFELRMDTAFPEVVHACARTDQPEEQWIDGQIEEAYGKLHEMGFAHSVECWDEEGLQGGLYGVALGKAFFGESMFHRKTDASKIALVALVQYLRAHRFLFLDTQWTTPHLLKFGTYEVPAKEYRKLLKRALEEQ</sequence>
<protein>
    <recommendedName>
        <fullName evidence="1">Leucyl/phenylalanyl-tRNA--protein transferase</fullName>
        <ecNumber evidence="1">2.3.2.6</ecNumber>
    </recommendedName>
    <alternativeName>
        <fullName evidence="1">L/F-transferase</fullName>
    </alternativeName>
    <alternativeName>
        <fullName evidence="1">Leucyltransferase</fullName>
    </alternativeName>
    <alternativeName>
        <fullName evidence="1">Phenyalanyltransferase</fullName>
    </alternativeName>
</protein>
<accession>B2UNS0</accession>
<proteinExistence type="inferred from homology"/>
<organism>
    <name type="scientific">Akkermansia muciniphila (strain ATCC BAA-835 / DSM 22959 / JCM 33894 / BCRC 81048 / CCUG 64013 / CIP 107961 / Muc)</name>
    <dbReference type="NCBI Taxonomy" id="349741"/>
    <lineage>
        <taxon>Bacteria</taxon>
        <taxon>Pseudomonadati</taxon>
        <taxon>Verrucomicrobiota</taxon>
        <taxon>Verrucomicrobiia</taxon>
        <taxon>Verrucomicrobiales</taxon>
        <taxon>Akkermansiaceae</taxon>
        <taxon>Akkermansia</taxon>
    </lineage>
</organism>
<keyword id="KW-0012">Acyltransferase</keyword>
<keyword id="KW-0963">Cytoplasm</keyword>
<keyword id="KW-1185">Reference proteome</keyword>
<keyword id="KW-0808">Transferase</keyword>
<name>LFTR_AKKM8</name>
<comment type="function">
    <text evidence="1">Functions in the N-end rule pathway of protein degradation where it conjugates Leu, Phe and, less efficiently, Met from aminoacyl-tRNAs to the N-termini of proteins containing an N-terminal arginine or lysine.</text>
</comment>
<comment type="catalytic activity">
    <reaction evidence="1">
        <text>N-terminal L-lysyl-[protein] + L-leucyl-tRNA(Leu) = N-terminal L-leucyl-L-lysyl-[protein] + tRNA(Leu) + H(+)</text>
        <dbReference type="Rhea" id="RHEA:12340"/>
        <dbReference type="Rhea" id="RHEA-COMP:9613"/>
        <dbReference type="Rhea" id="RHEA-COMP:9622"/>
        <dbReference type="Rhea" id="RHEA-COMP:12670"/>
        <dbReference type="Rhea" id="RHEA-COMP:12671"/>
        <dbReference type="ChEBI" id="CHEBI:15378"/>
        <dbReference type="ChEBI" id="CHEBI:65249"/>
        <dbReference type="ChEBI" id="CHEBI:78442"/>
        <dbReference type="ChEBI" id="CHEBI:78494"/>
        <dbReference type="ChEBI" id="CHEBI:133043"/>
        <dbReference type="EC" id="2.3.2.6"/>
    </reaction>
</comment>
<comment type="catalytic activity">
    <reaction evidence="1">
        <text>N-terminal L-arginyl-[protein] + L-leucyl-tRNA(Leu) = N-terminal L-leucyl-L-arginyl-[protein] + tRNA(Leu) + H(+)</text>
        <dbReference type="Rhea" id="RHEA:50416"/>
        <dbReference type="Rhea" id="RHEA-COMP:9613"/>
        <dbReference type="Rhea" id="RHEA-COMP:9622"/>
        <dbReference type="Rhea" id="RHEA-COMP:12672"/>
        <dbReference type="Rhea" id="RHEA-COMP:12673"/>
        <dbReference type="ChEBI" id="CHEBI:15378"/>
        <dbReference type="ChEBI" id="CHEBI:64719"/>
        <dbReference type="ChEBI" id="CHEBI:78442"/>
        <dbReference type="ChEBI" id="CHEBI:78494"/>
        <dbReference type="ChEBI" id="CHEBI:133044"/>
        <dbReference type="EC" id="2.3.2.6"/>
    </reaction>
</comment>
<comment type="catalytic activity">
    <reaction evidence="1">
        <text>L-phenylalanyl-tRNA(Phe) + an N-terminal L-alpha-aminoacyl-[protein] = an N-terminal L-phenylalanyl-L-alpha-aminoacyl-[protein] + tRNA(Phe)</text>
        <dbReference type="Rhea" id="RHEA:43632"/>
        <dbReference type="Rhea" id="RHEA-COMP:9668"/>
        <dbReference type="Rhea" id="RHEA-COMP:9699"/>
        <dbReference type="Rhea" id="RHEA-COMP:10636"/>
        <dbReference type="Rhea" id="RHEA-COMP:10637"/>
        <dbReference type="ChEBI" id="CHEBI:78442"/>
        <dbReference type="ChEBI" id="CHEBI:78531"/>
        <dbReference type="ChEBI" id="CHEBI:78597"/>
        <dbReference type="ChEBI" id="CHEBI:83561"/>
        <dbReference type="EC" id="2.3.2.6"/>
    </reaction>
</comment>
<comment type="subcellular location">
    <subcellularLocation>
        <location evidence="1">Cytoplasm</location>
    </subcellularLocation>
</comment>
<comment type="similarity">
    <text evidence="1">Belongs to the L/F-transferase family.</text>
</comment>
<evidence type="ECO:0000255" key="1">
    <source>
        <dbReference type="HAMAP-Rule" id="MF_00688"/>
    </source>
</evidence>
<dbReference type="EC" id="2.3.2.6" evidence="1"/>
<dbReference type="EMBL" id="CP001071">
    <property type="protein sequence ID" value="ACD05786.1"/>
    <property type="molecule type" value="Genomic_DNA"/>
</dbReference>
<dbReference type="RefSeq" id="WP_012421000.1">
    <property type="nucleotide sequence ID" value="NZ_CP071807.1"/>
</dbReference>
<dbReference type="SMR" id="B2UNS0"/>
<dbReference type="STRING" id="349741.Amuc_1973"/>
<dbReference type="PaxDb" id="349741-Amuc_1973"/>
<dbReference type="KEGG" id="amu:Amuc_1973"/>
<dbReference type="eggNOG" id="COG2360">
    <property type="taxonomic scope" value="Bacteria"/>
</dbReference>
<dbReference type="HOGENOM" id="CLU_075045_1_1_0"/>
<dbReference type="OrthoDB" id="9790282at2"/>
<dbReference type="BioCyc" id="AMUC349741:G1GBX-2104-MONOMER"/>
<dbReference type="Proteomes" id="UP000001031">
    <property type="component" value="Chromosome"/>
</dbReference>
<dbReference type="GO" id="GO:0005737">
    <property type="term" value="C:cytoplasm"/>
    <property type="evidence" value="ECO:0007669"/>
    <property type="project" value="UniProtKB-SubCell"/>
</dbReference>
<dbReference type="GO" id="GO:0008914">
    <property type="term" value="F:leucyl-tRNA--protein transferase activity"/>
    <property type="evidence" value="ECO:0007669"/>
    <property type="project" value="UniProtKB-UniRule"/>
</dbReference>
<dbReference type="GO" id="GO:0030163">
    <property type="term" value="P:protein catabolic process"/>
    <property type="evidence" value="ECO:0007669"/>
    <property type="project" value="UniProtKB-UniRule"/>
</dbReference>
<dbReference type="FunFam" id="3.40.630.70:FF:000001">
    <property type="entry name" value="Leucyl/phenylalanyl-tRNA--protein transferase"/>
    <property type="match status" value="1"/>
</dbReference>
<dbReference type="Gene3D" id="3.40.630.70">
    <property type="entry name" value="Leucyl/phenylalanyl-tRNA-protein transferase, C-terminal domain"/>
    <property type="match status" value="1"/>
</dbReference>
<dbReference type="HAMAP" id="MF_00688">
    <property type="entry name" value="Leu_Phe_trans"/>
    <property type="match status" value="1"/>
</dbReference>
<dbReference type="InterPro" id="IPR016181">
    <property type="entry name" value="Acyl_CoA_acyltransferase"/>
</dbReference>
<dbReference type="InterPro" id="IPR004616">
    <property type="entry name" value="Leu/Phe-tRNA_Trfase"/>
</dbReference>
<dbReference type="InterPro" id="IPR042203">
    <property type="entry name" value="Leu/Phe-tRNA_Trfase_C"/>
</dbReference>
<dbReference type="NCBIfam" id="TIGR00667">
    <property type="entry name" value="aat"/>
    <property type="match status" value="1"/>
</dbReference>
<dbReference type="PANTHER" id="PTHR30098">
    <property type="entry name" value="LEUCYL/PHENYLALANYL-TRNA--PROTEIN TRANSFERASE"/>
    <property type="match status" value="1"/>
</dbReference>
<dbReference type="PANTHER" id="PTHR30098:SF2">
    <property type="entry name" value="LEUCYL_PHENYLALANYL-TRNA--PROTEIN TRANSFERASE"/>
    <property type="match status" value="1"/>
</dbReference>
<dbReference type="Pfam" id="PF03588">
    <property type="entry name" value="Leu_Phe_trans"/>
    <property type="match status" value="1"/>
</dbReference>
<dbReference type="SUPFAM" id="SSF55729">
    <property type="entry name" value="Acyl-CoA N-acyltransferases (Nat)"/>
    <property type="match status" value="1"/>
</dbReference>
<reference key="1">
    <citation type="journal article" date="2011" name="PLoS ONE">
        <title>The genome of Akkermansia muciniphila, a dedicated intestinal mucin degrader, and its use in exploring intestinal metagenomes.</title>
        <authorList>
            <person name="van Passel M.W."/>
            <person name="Kant R."/>
            <person name="Zoetendal E.G."/>
            <person name="Plugge C.M."/>
            <person name="Derrien M."/>
            <person name="Malfatti S.A."/>
            <person name="Chain P.S."/>
            <person name="Woyke T."/>
            <person name="Palva A."/>
            <person name="de Vos W.M."/>
            <person name="Smidt H."/>
        </authorList>
    </citation>
    <scope>NUCLEOTIDE SEQUENCE [LARGE SCALE GENOMIC DNA]</scope>
    <source>
        <strain>ATCC BAA-835 / DSM 22959 / JCM 33894 / BCRC 81048 / CCUG 64013 / CIP 107961 / Muc</strain>
    </source>
</reference>